<protein>
    <recommendedName>
        <fullName>Chromosome-associated kinesin KIF4A</fullName>
    </recommendedName>
    <alternativeName>
        <fullName>Chromokinesin-A</fullName>
    </alternativeName>
</protein>
<keyword id="KW-0002">3D-structure</keyword>
<keyword id="KW-0025">Alternative splicing</keyword>
<keyword id="KW-0067">ATP-binding</keyword>
<keyword id="KW-0158">Chromosome</keyword>
<keyword id="KW-0175">Coiled coil</keyword>
<keyword id="KW-0963">Cytoplasm</keyword>
<keyword id="KW-0206">Cytoskeleton</keyword>
<keyword id="KW-0238">DNA-binding</keyword>
<keyword id="KW-0991">Intellectual disability</keyword>
<keyword id="KW-0408">Iron</keyword>
<keyword id="KW-0411">Iron-sulfur</keyword>
<keyword id="KW-1017">Isopeptide bond</keyword>
<keyword id="KW-0479">Metal-binding</keyword>
<keyword id="KW-0493">Microtubule</keyword>
<keyword id="KW-0505">Motor protein</keyword>
<keyword id="KW-0547">Nucleotide-binding</keyword>
<keyword id="KW-0539">Nucleus</keyword>
<keyword id="KW-0597">Phosphoprotein</keyword>
<keyword id="KW-1267">Proteomics identification</keyword>
<keyword id="KW-1185">Reference proteome</keyword>
<keyword id="KW-0832">Ubl conjugation</keyword>
<gene>
    <name type="primary">KIF4A</name>
    <name type="synonym">KIF4</name>
</gene>
<name>KIF4A_HUMAN</name>
<proteinExistence type="evidence at protein level"/>
<comment type="function">
    <text evidence="1 7 9 11">Iron-sulfur (Fe-S) cluster binding motor protein that has a role in chromosome segregation during mitosis (PubMed:29848660). Translocates PRC1 to the plus ends of interdigitating spindle microtubules during the metaphase to anaphase transition, an essential step for the formation of an organized central spindle midzone and midbody and for successful cytokinesis (PubMed:15297875, PubMed:15625105). May play a role in mitotic chromosomal positioning and bipolar spindle stabilization (By similarity).</text>
</comment>
<comment type="cofactor">
    <cofactor evidence="11">
        <name>[2Fe-2S] cluster</name>
        <dbReference type="ChEBI" id="CHEBI:190135"/>
    </cofactor>
    <cofactor evidence="11">
        <name>[4Fe-4S] cluster</name>
        <dbReference type="ChEBI" id="CHEBI:49883"/>
    </cofactor>
    <text evidence="11">Binds 1 [4Fe-4S] cluster (PubMed:29848660). In the presence of oxygen, the [4Fe-4S] cluster may be converted to [2Fe-2S] (PubMed:29848660).</text>
</comment>
<comment type="subunit">
    <text evidence="7 9 11">Interacts with the cytosolic iron-sulfur protein assembly (CIA) complex components CIAO2B and MMS19; the interactions facilitate the transfer of Fe-S clusters to KIF4A to ensure proper localization of KIF4A to mitotic machinery components (PubMed:29848660). Interacts (via C-terminus) with unphosphorylated PRC1 (via N-terminus); the interaction is required for the progression of mitosis (PubMed:15297875, PubMed:15625105, PubMed:29848660).</text>
</comment>
<comment type="interaction">
    <interactant intactId="EBI-1057516">
        <id>O95239</id>
    </interactant>
    <interactant intactId="EBI-2680164">
        <id>O94880</id>
        <label>PHF14</label>
    </interactant>
    <organismsDiffer>false</organismsDiffer>
    <experiments>4</experiments>
</comment>
<comment type="interaction">
    <interactant intactId="EBI-1057516">
        <id>O95239</id>
    </interactant>
    <interactant intactId="EBI-16716857">
        <id>O94880-1</id>
        <label>PHF14</label>
    </interactant>
    <organismsDiffer>false</organismsDiffer>
    <experiments>3</experiments>
</comment>
<comment type="subcellular location">
    <subcellularLocation>
        <location evidence="6">Nucleus matrix</location>
    </subcellularLocation>
    <subcellularLocation>
        <location evidence="6">Cytoplasm</location>
    </subcellularLocation>
    <subcellularLocation>
        <location evidence="7 11">Cytoplasm</location>
        <location evidence="7 11">Cytoskeleton</location>
        <location evidence="7 11">Spindle</location>
    </subcellularLocation>
    <subcellularLocation>
        <location evidence="7 11">Midbody</location>
    </subcellularLocation>
    <subcellularLocation>
        <location evidence="6 7 11">Chromosome</location>
    </subcellularLocation>
    <text evidence="6 7 9 11">Associates with chromosomes at all stage of mitosis (PubMed:11736643, PubMed:15297875, PubMed:15625105). Chromatin localization is dependent on iron-sulfur cluster binding (PubMed:29848660). In anaphase, associates with the mitotic spindle midzone (PubMed:15297875). In telophase and cytokinesis, co-localizes with CIAO2B at the spindle midzone and midbody (PubMed:15297875, PubMed:29848660). Co-localizes with PRC1 in early mitosis and at the spindle midzone from anaphase B to telophase (PubMed:15297875, PubMed:15625105). Does not localize to the nucleolus (PubMed:11736643).</text>
</comment>
<comment type="alternative products">
    <event type="alternative splicing"/>
    <isoform>
        <id>O95239-1</id>
        <name>1</name>
        <sequence type="displayed"/>
    </isoform>
    <isoform>
        <id>O95239-2</id>
        <name>2</name>
        <sequence type="described" ref="VSP_013375 VSP_013376"/>
    </isoform>
</comment>
<comment type="tissue specificity">
    <text evidence="5">Highly expressed in hematopoietic tissues, fetal liver, spleen, thymus and adult thymus and bone marrow. Lower levels are found in heart, testis, kidney, colon and lung.</text>
</comment>
<comment type="disease" evidence="10">
    <disease id="DI-04156">
        <name>Intellectual developmental disorder, X-linked 100</name>
        <acronym>XLID100</acronym>
        <description>A disorder characterized by significantly below average general intellectual functioning associated with impairments in adaptive behavior and manifested during the developmental period. Intellectual deficiency is the only primary symptom of non-syndromic X-linked forms, while syndromic forms present with associated physical, neurological and/or psychiatric manifestations. XLID100 clinical features include intellectual disability, epilepsy, microcephaly and cortical malformations.</description>
        <dbReference type="MIM" id="300923"/>
    </disease>
    <text>The disease may be caused by variants affecting the gene represented in this entry.</text>
</comment>
<comment type="disease" evidence="12">
    <disease id="DI-06767">
        <name>Taurodontism, microdontia, and dens invaginatus</name>
        <acronym>TMDI</acronym>
        <description>An X-linked recessive disorder characterized by the triad of taurodontism, microdontia, and dens invaginatus. Taurodontism is a rare developmental dental condition that largely affects the molar teeth and may be associated with hypodontia. In taurodontism, the crown of the molar tooth and pulp chamber are disproportionately longer than the roots. Microdontia, a mild form of hypodontia, is defined as smaller than normal teeth with shortened crowns (vertically or mesio-distally) and loss of contact areas between the teeth. Dens invaginatus or dens invagination is a tooth developmental anomaly that results from either the dental papilla folding into the developing tooth or the entire enamel organ folding into the dental papilla. In both instances, this leads to the formation of a tooth within a tooth.</description>
        <dbReference type="MIM" id="313490"/>
    </disease>
    <text>The disease may be caused by variants affecting the gene represented in this entry.</text>
</comment>
<comment type="similarity">
    <text evidence="3">Belongs to the TRAFAC class myosin-kinesin ATPase superfamily. Kinesin family. Chromokinesin subfamily.</text>
</comment>
<comment type="sequence caution" evidence="14">
    <conflict type="miscellaneous discrepancy">
        <sequence resource="EMBL-CDS" id="AAH49218"/>
    </conflict>
    <text>Contaminating sequence. Potential poly-A sequence.</text>
</comment>
<sequence>MKEEVKGIPVRVALRCRPLVPKEISEGCQMCLSFVPGEPQVVVGTDKSFTYDFVFDPSTEQEEVFNTAVAPLIKGVFKGYNATVLAYGQTGSGKTYSMGGAYTAEQENEPTVGVIPRVIQLLFKEIDKKSDFEFTLKVSYLEIYNEEILDLLCPSREKAQINIREDPKEGIKIVGLTEKTVLVALDTVSCLEQGNNSRTVASTAMNSQSSRSHAIFTISLEQRKKSDKNSSFRSKLHLVDLAGSERQKKTKAEGDRLKEGININRGLLCLGNVISALGDDKKGGFVPYRDSKLTRLLQDSLGGNSHTLMIACVSPADSNLEETLNTLRYADRARKIKNKPIVNIDPQTAELNHLKQQVQQLQVLLLQAHGGTLPGSITVEPSENLQSLMEKNQSLVEENEKLSRGLSEAAGQTAQMLERIILTEQANEKMNAKLEELRQHAACKLDLQKLVETLEDQELKENVEIICNLQQLITQLSDETVACMAAAIDTAVEQEAQVETSPETSRSSDAFTTQHALRQAQMSKELVELNKALALKEALARKMTQNDSQLQPIQYQYQDNIKELELEVINLQKEKEELVLELQTAKKDANQAKLSERRRKRLQELEGQIADLKKKLNEQSKLLKLKESTERTVSKLNQEIRMMKNQRVQLMRQMKEDAEKFRQWKQKKDKEVIQLKERDRKRQYELLKLERNFQKQSNVLRRKTEEAAAANKRLKDALQKQREVADKRKETQSRGMEGTAARVKNWLGNEIEVMVSTEEAKRHLNDLLEDRKILAQDVAQLKEKKESGENPPPKLRRRTFSLTEVRGQVSESEDSITKQIESLETEMEFRSAQIADLQQKLLDAESEDRPKQRWENIATILEAKCALKYLIGELVSSKIQVSKLESSLKQSKTSCADMQKMLFEERNHFAEIETELQAELVRMEQQHQEKVLYLLSQLQQSQMAEKQLEESVSEKEQQLLSTLKCQDEELEKMREVCEQNQQLLRENEIIKQKLTLLQVASRQKHLPKDTLLSPDSSFEYVPPKPKPSRVKEKFLEQSMDIEDLKYCSEHSVNEHEDGDGDDDEGDDEEWKPTKLVKVSRKNIQGCSCKGWCGNKQCGCRKQKSDCGVDCCCDPTKCRNRQQGKDSLGTVERTQDSEGSFKLEDPTEVTPGLSFFNPVCATPNSKILKEMCDVEQVLSKKTPPAPSPFDLPELKHVATEYQENKAPGKKKKRALASNTSFFSGCSPIEEEAH</sequence>
<reference key="1">
    <citation type="submission" date="1999-08" db="EMBL/GenBank/DDBJ databases">
        <title>Human KIF4 mRNA, complete coding sequence.</title>
        <authorList>
            <person name="Villard L."/>
        </authorList>
    </citation>
    <scope>NUCLEOTIDE SEQUENCE [MRNA] (ISOFORM 1)</scope>
    <source>
        <tissue>Lymphocyte</tissue>
    </source>
</reference>
<reference key="2">
    <citation type="journal article" date="2000" name="Biochim. Biophys. Acta">
        <title>Identification of the human homologue of mouse KIF4, a kinesin superfamily motor protein.</title>
        <authorList>
            <person name="Oh S.J."/>
            <person name="Hahn H."/>
            <person name="Torrey T.A."/>
            <person name="Shin H."/>
            <person name="Choi W."/>
            <person name="Lee Y.M."/>
            <person name="Morse H.C. III"/>
            <person name="Kim W."/>
        </authorList>
    </citation>
    <scope>NUCLEOTIDE SEQUENCE [MRNA] (ISOFORM 1)</scope>
    <scope>TISSUE SPECIFICITY</scope>
    <scope>VARIANT TRP-422</scope>
</reference>
<reference key="3">
    <citation type="submission" date="2000-02" db="EMBL/GenBank/DDBJ databases">
        <authorList>
            <person name="Rentsch A."/>
            <person name="Neumann T."/>
            <person name="Rommerskirch W."/>
        </authorList>
    </citation>
    <scope>NUCLEOTIDE SEQUENCE [MRNA] (ISOFORM 1)</scope>
    <source>
        <tissue>Retinoblastoma</tissue>
    </source>
</reference>
<reference key="4">
    <citation type="journal article" date="2004" name="Nat. Genet.">
        <title>Complete sequencing and characterization of 21,243 full-length human cDNAs.</title>
        <authorList>
            <person name="Ota T."/>
            <person name="Suzuki Y."/>
            <person name="Nishikawa T."/>
            <person name="Otsuki T."/>
            <person name="Sugiyama T."/>
            <person name="Irie R."/>
            <person name="Wakamatsu A."/>
            <person name="Hayashi K."/>
            <person name="Sato H."/>
            <person name="Nagai K."/>
            <person name="Kimura K."/>
            <person name="Makita H."/>
            <person name="Sekine M."/>
            <person name="Obayashi M."/>
            <person name="Nishi T."/>
            <person name="Shibahara T."/>
            <person name="Tanaka T."/>
            <person name="Ishii S."/>
            <person name="Yamamoto J."/>
            <person name="Saito K."/>
            <person name="Kawai Y."/>
            <person name="Isono Y."/>
            <person name="Nakamura Y."/>
            <person name="Nagahari K."/>
            <person name="Murakami K."/>
            <person name="Yasuda T."/>
            <person name="Iwayanagi T."/>
            <person name="Wagatsuma M."/>
            <person name="Shiratori A."/>
            <person name="Sudo H."/>
            <person name="Hosoiri T."/>
            <person name="Kaku Y."/>
            <person name="Kodaira H."/>
            <person name="Kondo H."/>
            <person name="Sugawara M."/>
            <person name="Takahashi M."/>
            <person name="Kanda K."/>
            <person name="Yokoi T."/>
            <person name="Furuya T."/>
            <person name="Kikkawa E."/>
            <person name="Omura Y."/>
            <person name="Abe K."/>
            <person name="Kamihara K."/>
            <person name="Katsuta N."/>
            <person name="Sato K."/>
            <person name="Tanikawa M."/>
            <person name="Yamazaki M."/>
            <person name="Ninomiya K."/>
            <person name="Ishibashi T."/>
            <person name="Yamashita H."/>
            <person name="Murakawa K."/>
            <person name="Fujimori K."/>
            <person name="Tanai H."/>
            <person name="Kimata M."/>
            <person name="Watanabe M."/>
            <person name="Hiraoka S."/>
            <person name="Chiba Y."/>
            <person name="Ishida S."/>
            <person name="Ono Y."/>
            <person name="Takiguchi S."/>
            <person name="Watanabe S."/>
            <person name="Yosida M."/>
            <person name="Hotuta T."/>
            <person name="Kusano J."/>
            <person name="Kanehori K."/>
            <person name="Takahashi-Fujii A."/>
            <person name="Hara H."/>
            <person name="Tanase T.-O."/>
            <person name="Nomura Y."/>
            <person name="Togiya S."/>
            <person name="Komai F."/>
            <person name="Hara R."/>
            <person name="Takeuchi K."/>
            <person name="Arita M."/>
            <person name="Imose N."/>
            <person name="Musashino K."/>
            <person name="Yuuki H."/>
            <person name="Oshima A."/>
            <person name="Sasaki N."/>
            <person name="Aotsuka S."/>
            <person name="Yoshikawa Y."/>
            <person name="Matsunawa H."/>
            <person name="Ichihara T."/>
            <person name="Shiohata N."/>
            <person name="Sano S."/>
            <person name="Moriya S."/>
            <person name="Momiyama H."/>
            <person name="Satoh N."/>
            <person name="Takami S."/>
            <person name="Terashima Y."/>
            <person name="Suzuki O."/>
            <person name="Nakagawa S."/>
            <person name="Senoh A."/>
            <person name="Mizoguchi H."/>
            <person name="Goto Y."/>
            <person name="Shimizu F."/>
            <person name="Wakebe H."/>
            <person name="Hishigaki H."/>
            <person name="Watanabe T."/>
            <person name="Sugiyama A."/>
            <person name="Takemoto M."/>
            <person name="Kawakami B."/>
            <person name="Yamazaki M."/>
            <person name="Watanabe K."/>
            <person name="Kumagai A."/>
            <person name="Itakura S."/>
            <person name="Fukuzumi Y."/>
            <person name="Fujimori Y."/>
            <person name="Komiyama M."/>
            <person name="Tashiro H."/>
            <person name="Tanigami A."/>
            <person name="Fujiwara T."/>
            <person name="Ono T."/>
            <person name="Yamada K."/>
            <person name="Fujii Y."/>
            <person name="Ozaki K."/>
            <person name="Hirao M."/>
            <person name="Ohmori Y."/>
            <person name="Kawabata A."/>
            <person name="Hikiji T."/>
            <person name="Kobatake N."/>
            <person name="Inagaki H."/>
            <person name="Ikema Y."/>
            <person name="Okamoto S."/>
            <person name="Okitani R."/>
            <person name="Kawakami T."/>
            <person name="Noguchi S."/>
            <person name="Itoh T."/>
            <person name="Shigeta K."/>
            <person name="Senba T."/>
            <person name="Matsumura K."/>
            <person name="Nakajima Y."/>
            <person name="Mizuno T."/>
            <person name="Morinaga M."/>
            <person name="Sasaki M."/>
            <person name="Togashi T."/>
            <person name="Oyama M."/>
            <person name="Hata H."/>
            <person name="Watanabe M."/>
            <person name="Komatsu T."/>
            <person name="Mizushima-Sugano J."/>
            <person name="Satoh T."/>
            <person name="Shirai Y."/>
            <person name="Takahashi Y."/>
            <person name="Nakagawa K."/>
            <person name="Okumura K."/>
            <person name="Nagase T."/>
            <person name="Nomura N."/>
            <person name="Kikuchi H."/>
            <person name="Masuho Y."/>
            <person name="Yamashita R."/>
            <person name="Nakai K."/>
            <person name="Yada T."/>
            <person name="Nakamura Y."/>
            <person name="Ohara O."/>
            <person name="Isogai T."/>
            <person name="Sugano S."/>
        </authorList>
    </citation>
    <scope>NUCLEOTIDE SEQUENCE [LARGE SCALE MRNA] (ISOFORM 1)</scope>
    <source>
        <tissue>Tongue</tissue>
    </source>
</reference>
<reference key="5">
    <citation type="journal article" date="2005" name="Nature">
        <title>The DNA sequence of the human X chromosome.</title>
        <authorList>
            <person name="Ross M.T."/>
            <person name="Grafham D.V."/>
            <person name="Coffey A.J."/>
            <person name="Scherer S."/>
            <person name="McLay K."/>
            <person name="Muzny D."/>
            <person name="Platzer M."/>
            <person name="Howell G.R."/>
            <person name="Burrows C."/>
            <person name="Bird C.P."/>
            <person name="Frankish A."/>
            <person name="Lovell F.L."/>
            <person name="Howe K.L."/>
            <person name="Ashurst J.L."/>
            <person name="Fulton R.S."/>
            <person name="Sudbrak R."/>
            <person name="Wen G."/>
            <person name="Jones M.C."/>
            <person name="Hurles M.E."/>
            <person name="Andrews T.D."/>
            <person name="Scott C.E."/>
            <person name="Searle S."/>
            <person name="Ramser J."/>
            <person name="Whittaker A."/>
            <person name="Deadman R."/>
            <person name="Carter N.P."/>
            <person name="Hunt S.E."/>
            <person name="Chen R."/>
            <person name="Cree A."/>
            <person name="Gunaratne P."/>
            <person name="Havlak P."/>
            <person name="Hodgson A."/>
            <person name="Metzker M.L."/>
            <person name="Richards S."/>
            <person name="Scott G."/>
            <person name="Steffen D."/>
            <person name="Sodergren E."/>
            <person name="Wheeler D.A."/>
            <person name="Worley K.C."/>
            <person name="Ainscough R."/>
            <person name="Ambrose K.D."/>
            <person name="Ansari-Lari M.A."/>
            <person name="Aradhya S."/>
            <person name="Ashwell R.I."/>
            <person name="Babbage A.K."/>
            <person name="Bagguley C.L."/>
            <person name="Ballabio A."/>
            <person name="Banerjee R."/>
            <person name="Barker G.E."/>
            <person name="Barlow K.F."/>
            <person name="Barrett I.P."/>
            <person name="Bates K.N."/>
            <person name="Beare D.M."/>
            <person name="Beasley H."/>
            <person name="Beasley O."/>
            <person name="Beck A."/>
            <person name="Bethel G."/>
            <person name="Blechschmidt K."/>
            <person name="Brady N."/>
            <person name="Bray-Allen S."/>
            <person name="Bridgeman A.M."/>
            <person name="Brown A.J."/>
            <person name="Brown M.J."/>
            <person name="Bonnin D."/>
            <person name="Bruford E.A."/>
            <person name="Buhay C."/>
            <person name="Burch P."/>
            <person name="Burford D."/>
            <person name="Burgess J."/>
            <person name="Burrill W."/>
            <person name="Burton J."/>
            <person name="Bye J.M."/>
            <person name="Carder C."/>
            <person name="Carrel L."/>
            <person name="Chako J."/>
            <person name="Chapman J.C."/>
            <person name="Chavez D."/>
            <person name="Chen E."/>
            <person name="Chen G."/>
            <person name="Chen Y."/>
            <person name="Chen Z."/>
            <person name="Chinault C."/>
            <person name="Ciccodicola A."/>
            <person name="Clark S.Y."/>
            <person name="Clarke G."/>
            <person name="Clee C.M."/>
            <person name="Clegg S."/>
            <person name="Clerc-Blankenburg K."/>
            <person name="Clifford K."/>
            <person name="Cobley V."/>
            <person name="Cole C.G."/>
            <person name="Conquer J.S."/>
            <person name="Corby N."/>
            <person name="Connor R.E."/>
            <person name="David R."/>
            <person name="Davies J."/>
            <person name="Davis C."/>
            <person name="Davis J."/>
            <person name="Delgado O."/>
            <person name="Deshazo D."/>
            <person name="Dhami P."/>
            <person name="Ding Y."/>
            <person name="Dinh H."/>
            <person name="Dodsworth S."/>
            <person name="Draper H."/>
            <person name="Dugan-Rocha S."/>
            <person name="Dunham A."/>
            <person name="Dunn M."/>
            <person name="Durbin K.J."/>
            <person name="Dutta I."/>
            <person name="Eades T."/>
            <person name="Ellwood M."/>
            <person name="Emery-Cohen A."/>
            <person name="Errington H."/>
            <person name="Evans K.L."/>
            <person name="Faulkner L."/>
            <person name="Francis F."/>
            <person name="Frankland J."/>
            <person name="Fraser A.E."/>
            <person name="Galgoczy P."/>
            <person name="Gilbert J."/>
            <person name="Gill R."/>
            <person name="Gloeckner G."/>
            <person name="Gregory S.G."/>
            <person name="Gribble S."/>
            <person name="Griffiths C."/>
            <person name="Grocock R."/>
            <person name="Gu Y."/>
            <person name="Gwilliam R."/>
            <person name="Hamilton C."/>
            <person name="Hart E.A."/>
            <person name="Hawes A."/>
            <person name="Heath P.D."/>
            <person name="Heitmann K."/>
            <person name="Hennig S."/>
            <person name="Hernandez J."/>
            <person name="Hinzmann B."/>
            <person name="Ho S."/>
            <person name="Hoffs M."/>
            <person name="Howden P.J."/>
            <person name="Huckle E.J."/>
            <person name="Hume J."/>
            <person name="Hunt P.J."/>
            <person name="Hunt A.R."/>
            <person name="Isherwood J."/>
            <person name="Jacob L."/>
            <person name="Johnson D."/>
            <person name="Jones S."/>
            <person name="de Jong P.J."/>
            <person name="Joseph S.S."/>
            <person name="Keenan S."/>
            <person name="Kelly S."/>
            <person name="Kershaw J.K."/>
            <person name="Khan Z."/>
            <person name="Kioschis P."/>
            <person name="Klages S."/>
            <person name="Knights A.J."/>
            <person name="Kosiura A."/>
            <person name="Kovar-Smith C."/>
            <person name="Laird G.K."/>
            <person name="Langford C."/>
            <person name="Lawlor S."/>
            <person name="Leversha M."/>
            <person name="Lewis L."/>
            <person name="Liu W."/>
            <person name="Lloyd C."/>
            <person name="Lloyd D.M."/>
            <person name="Loulseged H."/>
            <person name="Loveland J.E."/>
            <person name="Lovell J.D."/>
            <person name="Lozado R."/>
            <person name="Lu J."/>
            <person name="Lyne R."/>
            <person name="Ma J."/>
            <person name="Maheshwari M."/>
            <person name="Matthews L.H."/>
            <person name="McDowall J."/>
            <person name="McLaren S."/>
            <person name="McMurray A."/>
            <person name="Meidl P."/>
            <person name="Meitinger T."/>
            <person name="Milne S."/>
            <person name="Miner G."/>
            <person name="Mistry S.L."/>
            <person name="Morgan M."/>
            <person name="Morris S."/>
            <person name="Mueller I."/>
            <person name="Mullikin J.C."/>
            <person name="Nguyen N."/>
            <person name="Nordsiek G."/>
            <person name="Nyakatura G."/>
            <person name="O'dell C.N."/>
            <person name="Okwuonu G."/>
            <person name="Palmer S."/>
            <person name="Pandian R."/>
            <person name="Parker D."/>
            <person name="Parrish J."/>
            <person name="Pasternak S."/>
            <person name="Patel D."/>
            <person name="Pearce A.V."/>
            <person name="Pearson D.M."/>
            <person name="Pelan S.E."/>
            <person name="Perez L."/>
            <person name="Porter K.M."/>
            <person name="Ramsey Y."/>
            <person name="Reichwald K."/>
            <person name="Rhodes S."/>
            <person name="Ridler K.A."/>
            <person name="Schlessinger D."/>
            <person name="Schueler M.G."/>
            <person name="Sehra H.K."/>
            <person name="Shaw-Smith C."/>
            <person name="Shen H."/>
            <person name="Sheridan E.M."/>
            <person name="Shownkeen R."/>
            <person name="Skuce C.D."/>
            <person name="Smith M.L."/>
            <person name="Sotheran E.C."/>
            <person name="Steingruber H.E."/>
            <person name="Steward C.A."/>
            <person name="Storey R."/>
            <person name="Swann R.M."/>
            <person name="Swarbreck D."/>
            <person name="Tabor P.E."/>
            <person name="Taudien S."/>
            <person name="Taylor T."/>
            <person name="Teague B."/>
            <person name="Thomas K."/>
            <person name="Thorpe A."/>
            <person name="Timms K."/>
            <person name="Tracey A."/>
            <person name="Trevanion S."/>
            <person name="Tromans A.C."/>
            <person name="d'Urso M."/>
            <person name="Verduzco D."/>
            <person name="Villasana D."/>
            <person name="Waldron L."/>
            <person name="Wall M."/>
            <person name="Wang Q."/>
            <person name="Warren J."/>
            <person name="Warry G.L."/>
            <person name="Wei X."/>
            <person name="West A."/>
            <person name="Whitehead S.L."/>
            <person name="Whiteley M.N."/>
            <person name="Wilkinson J.E."/>
            <person name="Willey D.L."/>
            <person name="Williams G."/>
            <person name="Williams L."/>
            <person name="Williamson A."/>
            <person name="Williamson H."/>
            <person name="Wilming L."/>
            <person name="Woodmansey R.L."/>
            <person name="Wray P.W."/>
            <person name="Yen J."/>
            <person name="Zhang J."/>
            <person name="Zhou J."/>
            <person name="Zoghbi H."/>
            <person name="Zorilla S."/>
            <person name="Buck D."/>
            <person name="Reinhardt R."/>
            <person name="Poustka A."/>
            <person name="Rosenthal A."/>
            <person name="Lehrach H."/>
            <person name="Meindl A."/>
            <person name="Minx P.J."/>
            <person name="Hillier L.W."/>
            <person name="Willard H.F."/>
            <person name="Wilson R.K."/>
            <person name="Waterston R.H."/>
            <person name="Rice C.M."/>
            <person name="Vaudin M."/>
            <person name="Coulson A."/>
            <person name="Nelson D.L."/>
            <person name="Weinstock G."/>
            <person name="Sulston J.E."/>
            <person name="Durbin R.M."/>
            <person name="Hubbard T."/>
            <person name="Gibbs R.A."/>
            <person name="Beck S."/>
            <person name="Rogers J."/>
            <person name="Bentley D.R."/>
        </authorList>
    </citation>
    <scope>NUCLEOTIDE SEQUENCE [LARGE SCALE GENOMIC DNA]</scope>
</reference>
<reference key="6">
    <citation type="submission" date="2005-09" db="EMBL/GenBank/DDBJ databases">
        <authorList>
            <person name="Mural R.J."/>
            <person name="Istrail S."/>
            <person name="Sutton G.G."/>
            <person name="Florea L."/>
            <person name="Halpern A.L."/>
            <person name="Mobarry C.M."/>
            <person name="Lippert R."/>
            <person name="Walenz B."/>
            <person name="Shatkay H."/>
            <person name="Dew I."/>
            <person name="Miller J.R."/>
            <person name="Flanigan M.J."/>
            <person name="Edwards N.J."/>
            <person name="Bolanos R."/>
            <person name="Fasulo D."/>
            <person name="Halldorsson B.V."/>
            <person name="Hannenhalli S."/>
            <person name="Turner R."/>
            <person name="Yooseph S."/>
            <person name="Lu F."/>
            <person name="Nusskern D.R."/>
            <person name="Shue B.C."/>
            <person name="Zheng X.H."/>
            <person name="Zhong F."/>
            <person name="Delcher A.L."/>
            <person name="Huson D.H."/>
            <person name="Kravitz S.A."/>
            <person name="Mouchard L."/>
            <person name="Reinert K."/>
            <person name="Remington K.A."/>
            <person name="Clark A.G."/>
            <person name="Waterman M.S."/>
            <person name="Eichler E.E."/>
            <person name="Adams M.D."/>
            <person name="Hunkapiller M.W."/>
            <person name="Myers E.W."/>
            <person name="Venter J.C."/>
        </authorList>
    </citation>
    <scope>NUCLEOTIDE SEQUENCE [LARGE SCALE GENOMIC DNA]</scope>
</reference>
<reference key="7">
    <citation type="journal article" date="2004" name="Genome Res.">
        <title>The status, quality, and expansion of the NIH full-length cDNA project: the Mammalian Gene Collection (MGC).</title>
        <authorList>
            <consortium name="The MGC Project Team"/>
        </authorList>
    </citation>
    <scope>NUCLEOTIDE SEQUENCE [LARGE SCALE MRNA] (ISOFORM 2)</scope>
    <scope>NUCLEOTIDE SEQUENCE [LARGE SCALE MRNA] OF 1-668 (ISOFORM 1)</scope>
    <scope>VARIANT TRP-422</scope>
    <source>
        <tissue>Lymph</tissue>
        <tissue>Testis</tissue>
    </source>
</reference>
<reference key="8">
    <citation type="journal article" date="1997" name="Gene">
        <title>Increased chromokinesin immunoreactivity in retinoblastoma cells.</title>
        <authorList>
            <person name="Yan R.-T."/>
            <person name="Wang S.-Z."/>
        </authorList>
    </citation>
    <scope>NUCLEOTIDE SEQUENCE [MRNA] OF 128-1232</scope>
    <source>
        <tissue>Retinoblastoma</tissue>
    </source>
</reference>
<reference key="9">
    <citation type="journal article" date="2001" name="Biochem. J.">
        <title>Human kinesin superfamily member 4 is dominantly localized in the nuclear matrix and is associated with chromosomes during mitosis.</title>
        <authorList>
            <person name="Lee Y.M."/>
            <person name="Lee S."/>
            <person name="Lee E."/>
            <person name="Shin H."/>
            <person name="Hahn H."/>
            <person name="Choi W."/>
            <person name="Kim W."/>
        </authorList>
    </citation>
    <scope>SUBCELLULAR LOCATION</scope>
</reference>
<reference key="10">
    <citation type="journal article" date="2004" name="EMBO J.">
        <title>Essential roles of KIF4 and its binding partner PRC1 in organized central spindle midzone formation.</title>
        <authorList>
            <person name="Kurasawa Y."/>
            <person name="Earnshaw W.C."/>
            <person name="Mochizuki Y."/>
            <person name="Dohmae N."/>
            <person name="Todokoro K."/>
        </authorList>
    </citation>
    <scope>FUNCTION</scope>
    <scope>INTERACTION WITH PRC1</scope>
    <scope>SUBCELLULAR LOCATION</scope>
</reference>
<reference key="11">
    <citation type="journal article" date="2005" name="Proc. Natl. Acad. Sci. U.S.A.">
        <title>Cell cycle-dependent translocation of PRC1 on the spindle by Kif4 is essential for midzone formation and cytokinesis.</title>
        <authorList>
            <person name="Zhu C."/>
            <person name="Jiang W."/>
        </authorList>
    </citation>
    <scope>FUNCTION</scope>
    <scope>INTERACTION WITH PRC1</scope>
    <scope>SUBCELLULAR LOCATION</scope>
</reference>
<reference key="12">
    <citation type="journal article" date="2006" name="Cell">
        <title>Global, in vivo, and site-specific phosphorylation dynamics in signaling networks.</title>
        <authorList>
            <person name="Olsen J.V."/>
            <person name="Blagoev B."/>
            <person name="Gnad F."/>
            <person name="Macek B."/>
            <person name="Kumar C."/>
            <person name="Mortensen P."/>
            <person name="Mann M."/>
        </authorList>
    </citation>
    <scope>IDENTIFICATION BY MASS SPECTROMETRY [LARGE SCALE ANALYSIS]</scope>
    <source>
        <tissue>Cervix carcinoma</tissue>
    </source>
</reference>
<reference key="13">
    <citation type="journal article" date="2006" name="Nat. Biotechnol.">
        <title>A probability-based approach for high-throughput protein phosphorylation analysis and site localization.</title>
        <authorList>
            <person name="Beausoleil S.A."/>
            <person name="Villen J."/>
            <person name="Gerber S.A."/>
            <person name="Rush J."/>
            <person name="Gygi S.P."/>
        </authorList>
    </citation>
    <scope>PHOSPHORYLATION [LARGE SCALE ANALYSIS] AT THR-1181</scope>
    <scope>IDENTIFICATION BY MASS SPECTROMETRY [LARGE SCALE ANALYSIS]</scope>
    <source>
        <tissue>Cervix carcinoma</tissue>
    </source>
</reference>
<reference key="14">
    <citation type="journal article" date="2008" name="Proc. Natl. Acad. Sci. U.S.A.">
        <title>A quantitative atlas of mitotic phosphorylation.</title>
        <authorList>
            <person name="Dephoure N."/>
            <person name="Zhou C."/>
            <person name="Villen J."/>
            <person name="Beausoleil S.A."/>
            <person name="Bakalarski C.E."/>
            <person name="Elledge S.J."/>
            <person name="Gygi S.P."/>
        </authorList>
    </citation>
    <scope>PHOSPHORYLATION [LARGE SCALE ANALYSIS] AT THR-799; SER-801; SER-951; SER-1001; SER-1013; SER-1017 AND SER-1028</scope>
    <scope>IDENTIFICATION BY MASS SPECTROMETRY [LARGE SCALE ANALYSIS]</scope>
    <source>
        <tissue>Cervix carcinoma</tissue>
    </source>
</reference>
<reference key="15">
    <citation type="journal article" date="2008" name="Proteomics">
        <title>Large-scale phosphoproteome analysis of human liver tissue by enrichment and fractionation of phosphopeptides with strong anion exchange chromatography.</title>
        <authorList>
            <person name="Han G."/>
            <person name="Ye M."/>
            <person name="Zhou H."/>
            <person name="Jiang X."/>
            <person name="Feng S."/>
            <person name="Jiang X."/>
            <person name="Tian R."/>
            <person name="Wan D."/>
            <person name="Zou H."/>
            <person name="Gu J."/>
        </authorList>
    </citation>
    <scope>PHOSPHORYLATION [LARGE SCALE ANALYSIS] AT THR-995 AND SER-1001</scope>
    <scope>IDENTIFICATION BY MASS SPECTROMETRY [LARGE SCALE ANALYSIS]</scope>
    <source>
        <tissue>Liver</tissue>
    </source>
</reference>
<reference key="16">
    <citation type="journal article" date="2009" name="Anal. Chem.">
        <title>Lys-N and trypsin cover complementary parts of the phosphoproteome in a refined SCX-based approach.</title>
        <authorList>
            <person name="Gauci S."/>
            <person name="Helbig A.O."/>
            <person name="Slijper M."/>
            <person name="Krijgsveld J."/>
            <person name="Heck A.J."/>
            <person name="Mohammed S."/>
        </authorList>
    </citation>
    <scope>IDENTIFICATION BY MASS SPECTROMETRY [LARGE SCALE ANALYSIS]</scope>
</reference>
<reference key="17">
    <citation type="journal article" date="2010" name="Sci. Signal.">
        <title>Quantitative phosphoproteomics reveals widespread full phosphorylation site occupancy during mitosis.</title>
        <authorList>
            <person name="Olsen J.V."/>
            <person name="Vermeulen M."/>
            <person name="Santamaria A."/>
            <person name="Kumar C."/>
            <person name="Miller M.L."/>
            <person name="Jensen L.J."/>
            <person name="Gnad F."/>
            <person name="Cox J."/>
            <person name="Jensen T.S."/>
            <person name="Nigg E.A."/>
            <person name="Brunak S."/>
            <person name="Mann M."/>
        </authorList>
    </citation>
    <scope>PHOSPHORYLATION [LARGE SCALE ANALYSIS] AT THR-799; SER-801; SER-1001; THR-1181 AND SER-1186</scope>
    <scope>IDENTIFICATION BY MASS SPECTROMETRY [LARGE SCALE ANALYSIS]</scope>
    <source>
        <tissue>Cervix carcinoma</tissue>
    </source>
</reference>
<reference key="18">
    <citation type="journal article" date="2011" name="BMC Syst. Biol.">
        <title>Initial characterization of the human central proteome.</title>
        <authorList>
            <person name="Burkard T.R."/>
            <person name="Planyavsky M."/>
            <person name="Kaupe I."/>
            <person name="Breitwieser F.P."/>
            <person name="Buerckstuemmer T."/>
            <person name="Bennett K.L."/>
            <person name="Superti-Furga G."/>
            <person name="Colinge J."/>
        </authorList>
    </citation>
    <scope>IDENTIFICATION BY MASS SPECTROMETRY [LARGE SCALE ANALYSIS]</scope>
</reference>
<reference key="19">
    <citation type="journal article" date="2013" name="J. Proteome Res.">
        <title>Toward a comprehensive characterization of a human cancer cell phosphoproteome.</title>
        <authorList>
            <person name="Zhou H."/>
            <person name="Di Palma S."/>
            <person name="Preisinger C."/>
            <person name="Peng M."/>
            <person name="Polat A.N."/>
            <person name="Heck A.J."/>
            <person name="Mohammed S."/>
        </authorList>
    </citation>
    <scope>PHOSPHORYLATION [LARGE SCALE ANALYSIS] AT THR-799; SER-801; SER-815; SER-1126 AND THR-1181</scope>
    <scope>IDENTIFICATION BY MASS SPECTROMETRY [LARGE SCALE ANALYSIS]</scope>
    <source>
        <tissue>Cervix carcinoma</tissue>
        <tissue>Erythroleukemia</tissue>
    </source>
</reference>
<reference key="20">
    <citation type="journal article" date="2014" name="J. Med. Genet.">
        <title>Involvement of the kinesin family members KIF4A and KIF5C in intellectual disability and synaptic function.</title>
        <authorList>
            <person name="Willemsen M.H."/>
            <person name="Ba W."/>
            <person name="Wissink-Lindhout W.M."/>
            <person name="de Brouwer A.P."/>
            <person name="Haas S.A."/>
            <person name="Bienek M."/>
            <person name="Hu H."/>
            <person name="Vissers L.E."/>
            <person name="van Bokhoven H."/>
            <person name="Kalscheuer V."/>
            <person name="Nadif Kasri N."/>
            <person name="Kleefstra T."/>
        </authorList>
    </citation>
    <scope>INVOLVEMENT IN XLID100</scope>
</reference>
<reference key="21">
    <citation type="journal article" date="2017" name="Nat. Struct. Mol. Biol.">
        <title>Site-specific mapping of the human SUMO proteome reveals co-modification with phosphorylation.</title>
        <authorList>
            <person name="Hendriks I.A."/>
            <person name="Lyon D."/>
            <person name="Young C."/>
            <person name="Jensen L.J."/>
            <person name="Vertegaal A.C."/>
            <person name="Nielsen M.L."/>
        </authorList>
    </citation>
    <scope>SUMOYLATION [LARGE SCALE ANALYSIS] AT LYS-1194</scope>
    <scope>IDENTIFICATION BY MASS SPECTROMETRY [LARGE SCALE ANALYSIS]</scope>
</reference>
<reference key="22">
    <citation type="journal article" date="2018" name="J. Cell Sci.">
        <title>Fe-S cluster coordination of the chromokinesin KIF4A alters its subcellular localization during mitosis.</title>
        <authorList>
            <person name="Ben-Shimon L."/>
            <person name="Paul V.D."/>
            <person name="David-Kadoch G."/>
            <person name="Volpe M."/>
            <person name="Stuempfig M."/>
            <person name="Bill E."/>
            <person name="Muehlenhoff U."/>
            <person name="Lill R."/>
            <person name="Ben-Aroya S."/>
        </authorList>
    </citation>
    <scope>FUNCTION</scope>
    <scope>COFACTOR</scope>
    <scope>INTERACTION WITH CIAO2B; MMS19 AND PRC1</scope>
    <scope>SUBCELLULAR LOCATION</scope>
    <scope>MUTAGENESIS OF 1086-CYS--ASP-1144; CYS-1106; CYS-1110 AND CYS-1112</scope>
    <scope>REGION</scope>
</reference>
<reference key="23">
    <citation type="journal article" date="2019" name="Front. Genet.">
        <title>Missense Pathogenic variants in KIF4A Affect Dental Morphogenesis Resulting in X-linked Taurodontism, Microdontia and Dens-Invaginatus.</title>
        <authorList>
            <person name="Gowans L.J.J."/>
            <person name="Cameron-Christie S."/>
            <person name="Slayton R.L."/>
            <person name="Busch T."/>
            <person name="Romero-Bustillos M."/>
            <person name="Eliason S."/>
            <person name="Sweat M."/>
            <person name="Sobreira N."/>
            <person name="Yu W."/>
            <person name="Kantaputra P.N."/>
            <person name="Wohler E."/>
            <person name="Adeyemo W.L."/>
            <person name="Lachke S.A."/>
            <person name="Anand D."/>
            <person name="Campbell C."/>
            <person name="Drummond B.K."/>
            <person name="Markie D.M."/>
            <person name="van Vuuren W.J."/>
            <person name="van Vuuren L.J."/>
            <person name="Casamassimo P.S."/>
            <person name="Ettinger R."/>
            <person name="Owais A."/>
            <person name="van Staden I."/>
            <person name="Amendt B.A."/>
            <person name="Adeyemo A.A."/>
            <person name="Murray J.C."/>
            <person name="Robertson S.P."/>
            <person name="Butali A."/>
        </authorList>
    </citation>
    <scope>VARIANTS TMDI HIS-317 AND LYS-771</scope>
    <scope>INVOLVEMENT IN TMDI</scope>
</reference>
<evidence type="ECO:0000250" key="1">
    <source>
        <dbReference type="UniProtKB" id="P33174"/>
    </source>
</evidence>
<evidence type="ECO:0000255" key="2"/>
<evidence type="ECO:0000255" key="3">
    <source>
        <dbReference type="PROSITE-ProRule" id="PRU00283"/>
    </source>
</evidence>
<evidence type="ECO:0000256" key="4">
    <source>
        <dbReference type="SAM" id="MobiDB-lite"/>
    </source>
</evidence>
<evidence type="ECO:0000269" key="5">
    <source>
    </source>
</evidence>
<evidence type="ECO:0000269" key="6">
    <source>
    </source>
</evidence>
<evidence type="ECO:0000269" key="7">
    <source>
    </source>
</evidence>
<evidence type="ECO:0000269" key="8">
    <source>
    </source>
</evidence>
<evidence type="ECO:0000269" key="9">
    <source>
    </source>
</evidence>
<evidence type="ECO:0000269" key="10">
    <source>
    </source>
</evidence>
<evidence type="ECO:0000269" key="11">
    <source>
    </source>
</evidence>
<evidence type="ECO:0000269" key="12">
    <source>
    </source>
</evidence>
<evidence type="ECO:0000303" key="13">
    <source>
    </source>
</evidence>
<evidence type="ECO:0000305" key="14"/>
<evidence type="ECO:0007744" key="15">
    <source>
    </source>
</evidence>
<evidence type="ECO:0007744" key="16">
    <source>
    </source>
</evidence>
<evidence type="ECO:0007744" key="17">
    <source>
    </source>
</evidence>
<evidence type="ECO:0007744" key="18">
    <source>
    </source>
</evidence>
<evidence type="ECO:0007744" key="19">
    <source>
    </source>
</evidence>
<evidence type="ECO:0007744" key="20">
    <source>
    </source>
</evidence>
<feature type="chain" id="PRO_0000125437" description="Chromosome-associated kinesin KIF4A">
    <location>
        <begin position="1"/>
        <end position="1232"/>
    </location>
</feature>
<feature type="domain" description="Kinesin motor" evidence="3">
    <location>
        <begin position="9"/>
        <end position="336"/>
    </location>
</feature>
<feature type="region of interest" description="Disordered" evidence="4">
    <location>
        <begin position="496"/>
        <end position="515"/>
    </location>
</feature>
<feature type="region of interest" description="Required for the interaction with PRC1" evidence="7">
    <location>
        <begin position="663"/>
        <end position="1232"/>
    </location>
</feature>
<feature type="region of interest" description="Globular">
    <location>
        <begin position="1000"/>
        <end position="1232"/>
    </location>
</feature>
<feature type="region of interest" description="CRD; required for [4Fe-4S] cluster binding and localization to the spindle midzone and midbody during anaphase and telophase" evidence="11">
    <location>
        <begin position="1086"/>
        <end position="1144"/>
    </location>
</feature>
<feature type="region of interest" description="Disordered" evidence="4">
    <location>
        <begin position="1122"/>
        <end position="1142"/>
    </location>
</feature>
<feature type="coiled-coil region" evidence="2">
    <location>
        <begin position="350"/>
        <end position="999"/>
    </location>
</feature>
<feature type="short sequence motif" description="Nuclear localization signal" evidence="6">
    <location>
        <begin position="793"/>
        <end position="798"/>
    </location>
</feature>
<feature type="compositionally biased region" description="Polar residues" evidence="4">
    <location>
        <begin position="497"/>
        <end position="515"/>
    </location>
</feature>
<feature type="compositionally biased region" description="Basic and acidic residues" evidence="4">
    <location>
        <begin position="1132"/>
        <end position="1142"/>
    </location>
</feature>
<feature type="binding site" evidence="3">
    <location>
        <begin position="88"/>
        <end position="95"/>
    </location>
    <ligand>
        <name>ATP</name>
        <dbReference type="ChEBI" id="CHEBI:30616"/>
    </ligand>
</feature>
<feature type="modified residue" description="Phosphoserine" evidence="1">
    <location>
        <position position="394"/>
    </location>
</feature>
<feature type="modified residue" description="Phosphothreonine" evidence="17 18 19">
    <location>
        <position position="799"/>
    </location>
</feature>
<feature type="modified residue" description="Phosphoserine" evidence="17 18 19">
    <location>
        <position position="801"/>
    </location>
</feature>
<feature type="modified residue" description="Phosphoserine" evidence="1">
    <location>
        <position position="810"/>
    </location>
</feature>
<feature type="modified residue" description="Phosphoserine" evidence="19">
    <location>
        <position position="815"/>
    </location>
</feature>
<feature type="modified residue" description="Phosphoserine" evidence="17">
    <location>
        <position position="951"/>
    </location>
</feature>
<feature type="modified residue" description="Phosphothreonine" evidence="16">
    <location>
        <position position="995"/>
    </location>
</feature>
<feature type="modified residue" description="Phosphoserine" evidence="16 17 18">
    <location>
        <position position="1001"/>
    </location>
</feature>
<feature type="modified residue" description="Phosphoserine" evidence="17">
    <location>
        <position position="1013"/>
    </location>
</feature>
<feature type="modified residue" description="Phosphoserine" evidence="17">
    <location>
        <position position="1017"/>
    </location>
</feature>
<feature type="modified residue" description="Phosphoserine" evidence="17">
    <location>
        <position position="1028"/>
    </location>
</feature>
<feature type="modified residue" description="Phosphoserine" evidence="19">
    <location>
        <position position="1126"/>
    </location>
</feature>
<feature type="modified residue" description="Phosphothreonine" evidence="15 18 19">
    <location>
        <position position="1181"/>
    </location>
</feature>
<feature type="modified residue" description="Phosphoserine" evidence="18">
    <location>
        <position position="1186"/>
    </location>
</feature>
<feature type="modified residue" description="Phosphoserine" evidence="1">
    <location>
        <position position="1225"/>
    </location>
</feature>
<feature type="cross-link" description="Glycyl lysine isopeptide (Lys-Gly) (interchain with G-Cter in SUMO2)" evidence="20">
    <location>
        <position position="1194"/>
    </location>
</feature>
<feature type="splice variant" id="VSP_013375" description="In isoform 2." evidence="13">
    <original>CSCKGWCGNKQCGCRKQKSDCGVDCCCDPTKCRNRQQGKDSL</original>
    <variation>VLLLTPVISALWEAEARGLLEARSSRPAWATWRDPVSTKPKN</variation>
    <location>
        <begin position="1086"/>
        <end position="1127"/>
    </location>
</feature>
<feature type="splice variant" id="VSP_013376" description="In isoform 2." evidence="13">
    <location>
        <begin position="1128"/>
        <end position="1232"/>
    </location>
</feature>
<feature type="sequence variant" id="VAR_089012" description="In TMDI; uncertain significance." evidence="12">
    <original>D</original>
    <variation>H</variation>
    <location>
        <position position="317"/>
    </location>
</feature>
<feature type="sequence variant" id="VAR_021828" description="In dbSNP:rs1199457." evidence="5 8">
    <original>L</original>
    <variation>W</variation>
    <location>
        <position position="422"/>
    </location>
</feature>
<feature type="sequence variant" id="VAR_049693" description="In dbSNP:rs2297871.">
    <original>A</original>
    <variation>V</variation>
    <location>
        <position position="491"/>
    </location>
</feature>
<feature type="sequence variant" id="VAR_089013" description="In TMDI; uncertain significance; dbSNP:rs374370199." evidence="12">
    <original>R</original>
    <variation>K</variation>
    <location>
        <position position="771"/>
    </location>
</feature>
<feature type="sequence variant" id="VAR_049694" description="In dbSNP:rs1046485.">
    <original>L</original>
    <variation>S</variation>
    <location>
        <position position="1193"/>
    </location>
</feature>
<feature type="mutagenesis site" description="Diffuse localization and does not localize to the spindle midzone or midbody during anaphase and telophase. Does not affect the interaction with PRC1." evidence="11">
    <location>
        <begin position="1086"/>
        <end position="1144"/>
    </location>
</feature>
<feature type="mutagenesis site" description="Abolishes chromatin localization; in association with A-1110 and A-1112." evidence="11">
    <original>C</original>
    <variation>A</variation>
    <location>
        <position position="1106"/>
    </location>
</feature>
<feature type="mutagenesis site" description="Abolishes chromatin localization; in association with A-1106 and A-1112." evidence="11">
    <original>C</original>
    <variation>A</variation>
    <location>
        <position position="1110"/>
    </location>
</feature>
<feature type="mutagenesis site" description="Abolishes chromatin localization; in association with A-1106 and A-1110." evidence="11">
    <original>C</original>
    <variation>A</variation>
    <location>
        <position position="1112"/>
    </location>
</feature>
<feature type="sequence conflict" description="In Ref. 2; AAD05492." evidence="14" ref="2">
    <original>R</original>
    <variation>G</variation>
    <location>
        <position position="223"/>
    </location>
</feature>
<feature type="sequence conflict" description="In Ref. 8; AAF86334." evidence="14" ref="8">
    <original>S</original>
    <variation>T</variation>
    <location>
        <position position="231"/>
    </location>
</feature>
<feature type="sequence conflict" description="In Ref. 2; AAD05492." evidence="14" ref="2">
    <original>V</original>
    <variation>A</variation>
    <location>
        <position position="286"/>
    </location>
</feature>
<feature type="sequence conflict" description="In Ref. 8; AAF86334." evidence="14" ref="8">
    <original>L</original>
    <variation>H</variation>
    <location>
        <position position="564"/>
    </location>
</feature>
<feature type="sequence conflict" description="In Ref. 2; AAD05492." evidence="14" ref="2">
    <original>L</original>
    <variation>P</variation>
    <location>
        <position position="564"/>
    </location>
</feature>
<feature type="sequence conflict" description="In Ref. 3; CAB75427." evidence="14" ref="3">
    <original>K</original>
    <variation>E</variation>
    <location>
        <position position="600"/>
    </location>
</feature>
<feature type="sequence conflict" description="In Ref. 1 and 2." evidence="14" ref="1 2">
    <original>K</original>
    <variation>R</variation>
    <location>
        <position position="668"/>
    </location>
</feature>
<feature type="sequence conflict" description="In Ref. 1; AAD51855." evidence="14" ref="1">
    <original>Q</original>
    <variation>P</variation>
    <location>
        <position position="928"/>
    </location>
</feature>
<feature type="sequence conflict" description="In Ref. 3; CAB75427." evidence="14" ref="3">
    <original>Q</original>
    <variation>R</variation>
    <location>
        <position position="958"/>
    </location>
</feature>
<feature type="sequence conflict" description="In Ref. 1; AAD51855." evidence="14" ref="1">
    <original>L</original>
    <variation>Q</variation>
    <location>
        <position position="960"/>
    </location>
</feature>
<feature type="sequence conflict" description="In Ref. 8; AAF86334." evidence="14" ref="8">
    <original>LL</original>
    <variation>S</variation>
    <location>
        <begin position="996"/>
        <end position="997"/>
    </location>
</feature>
<feature type="sequence conflict" description="In Ref. 8; AAF86334." evidence="14" ref="8">
    <original>QKHLPKDTLLSP</original>
    <variation>RTLPRIPFYLQ</variation>
    <location>
        <begin position="1003"/>
        <end position="1014"/>
    </location>
</feature>
<feature type="sequence conflict" description="In Ref. 2; AAD05492." evidence="14" ref="2">
    <original>P</original>
    <variation>Q</variation>
    <location>
        <position position="1022"/>
    </location>
</feature>
<feature type="sequence conflict" description="In Ref. 2; AAD05492." evidence="14" ref="2">
    <original>K</original>
    <variation>N</variation>
    <location>
        <position position="1077"/>
    </location>
</feature>
<feature type="sequence conflict" description="In Ref. 2; AAD05492." evidence="14" ref="2">
    <original>G</original>
    <variation>S</variation>
    <location>
        <position position="1138"/>
    </location>
</feature>
<dbReference type="EMBL" id="AF179308">
    <property type="protein sequence ID" value="AAD51855.1"/>
    <property type="molecule type" value="mRNA"/>
</dbReference>
<dbReference type="EMBL" id="AF071592">
    <property type="protein sequence ID" value="AAD05492.2"/>
    <property type="molecule type" value="mRNA"/>
</dbReference>
<dbReference type="EMBL" id="AJ271784">
    <property type="protein sequence ID" value="CAB75427.1"/>
    <property type="molecule type" value="mRNA"/>
</dbReference>
<dbReference type="EMBL" id="AK313133">
    <property type="protein sequence ID" value="BAG35952.1"/>
    <property type="molecule type" value="mRNA"/>
</dbReference>
<dbReference type="EMBL" id="AL139398">
    <property type="status" value="NOT_ANNOTATED_CDS"/>
    <property type="molecule type" value="Genomic_DNA"/>
</dbReference>
<dbReference type="EMBL" id="AL357752">
    <property type="status" value="NOT_ANNOTATED_CDS"/>
    <property type="molecule type" value="Genomic_DNA"/>
</dbReference>
<dbReference type="EMBL" id="CH471132">
    <property type="protein sequence ID" value="EAX05341.1"/>
    <property type="molecule type" value="Genomic_DNA"/>
</dbReference>
<dbReference type="EMBL" id="CH471132">
    <property type="protein sequence ID" value="EAX05342.1"/>
    <property type="molecule type" value="Genomic_DNA"/>
</dbReference>
<dbReference type="EMBL" id="BC049218">
    <property type="protein sequence ID" value="AAH49218.1"/>
    <property type="status" value="ALT_SEQ"/>
    <property type="molecule type" value="mRNA"/>
</dbReference>
<dbReference type="EMBL" id="BC050548">
    <property type="protein sequence ID" value="AAH50548.1"/>
    <property type="molecule type" value="mRNA"/>
</dbReference>
<dbReference type="EMBL" id="AF277375">
    <property type="protein sequence ID" value="AAF86334.1"/>
    <property type="molecule type" value="mRNA"/>
</dbReference>
<dbReference type="CCDS" id="CCDS14401.1">
    <molecule id="O95239-1"/>
</dbReference>
<dbReference type="RefSeq" id="NP_036442.3">
    <molecule id="O95239-1"/>
    <property type="nucleotide sequence ID" value="NM_012310.4"/>
</dbReference>
<dbReference type="PDB" id="6OYL">
    <property type="method" value="X-ray"/>
    <property type="resolution" value="3.15 A"/>
    <property type="chains" value="B=1192-1232"/>
</dbReference>
<dbReference type="PDBsum" id="6OYL"/>
<dbReference type="SMR" id="O95239"/>
<dbReference type="BioGRID" id="117288">
    <property type="interactions" value="112"/>
</dbReference>
<dbReference type="CORUM" id="O95239"/>
<dbReference type="ELM" id="O95239"/>
<dbReference type="FunCoup" id="O95239">
    <property type="interactions" value="771"/>
</dbReference>
<dbReference type="IntAct" id="O95239">
    <property type="interactions" value="47"/>
</dbReference>
<dbReference type="MINT" id="O95239"/>
<dbReference type="STRING" id="9606.ENSP00000363524"/>
<dbReference type="ChEMBL" id="CHEMBL6163"/>
<dbReference type="GlyGen" id="O95239">
    <property type="glycosylation" value="2 sites, 1 O-linked glycan (1 site)"/>
</dbReference>
<dbReference type="iPTMnet" id="O95239"/>
<dbReference type="MetOSite" id="O95239"/>
<dbReference type="PhosphoSitePlus" id="O95239"/>
<dbReference type="SwissPalm" id="O95239"/>
<dbReference type="BioMuta" id="KIF4A"/>
<dbReference type="CPTAC" id="CPTAC-971"/>
<dbReference type="jPOST" id="O95239"/>
<dbReference type="MassIVE" id="O95239"/>
<dbReference type="PaxDb" id="9606-ENSP00000363524"/>
<dbReference type="PeptideAtlas" id="O95239"/>
<dbReference type="ProteomicsDB" id="50738">
    <molecule id="O95239-1"/>
</dbReference>
<dbReference type="ProteomicsDB" id="50739">
    <molecule id="O95239-2"/>
</dbReference>
<dbReference type="Pumba" id="O95239"/>
<dbReference type="Antibodypedia" id="27394">
    <property type="antibodies" value="228 antibodies from 33 providers"/>
</dbReference>
<dbReference type="DNASU" id="24137"/>
<dbReference type="Ensembl" id="ENST00000374403.4">
    <molecule id="O95239-1"/>
    <property type="protein sequence ID" value="ENSP00000363524.3"/>
    <property type="gene ID" value="ENSG00000090889.12"/>
</dbReference>
<dbReference type="GeneID" id="24137"/>
<dbReference type="KEGG" id="hsa:24137"/>
<dbReference type="MANE-Select" id="ENST00000374403.4">
    <property type="protein sequence ID" value="ENSP00000363524.3"/>
    <property type="RefSeq nucleotide sequence ID" value="NM_012310.5"/>
    <property type="RefSeq protein sequence ID" value="NP_036442.3"/>
</dbReference>
<dbReference type="UCSC" id="uc004dyg.4">
    <molecule id="O95239-1"/>
    <property type="organism name" value="human"/>
</dbReference>
<dbReference type="AGR" id="HGNC:13339"/>
<dbReference type="CTD" id="24137"/>
<dbReference type="DisGeNET" id="24137"/>
<dbReference type="GeneCards" id="KIF4A"/>
<dbReference type="HGNC" id="HGNC:13339">
    <property type="gene designation" value="KIF4A"/>
</dbReference>
<dbReference type="HPA" id="ENSG00000090889">
    <property type="expression patterns" value="Tissue enhanced (bone marrow, lymphoid tissue)"/>
</dbReference>
<dbReference type="MalaCards" id="KIF4A"/>
<dbReference type="MIM" id="300521">
    <property type="type" value="gene"/>
</dbReference>
<dbReference type="MIM" id="300923">
    <property type="type" value="phenotype"/>
</dbReference>
<dbReference type="MIM" id="313490">
    <property type="type" value="phenotype"/>
</dbReference>
<dbReference type="neXtProt" id="NX_O95239"/>
<dbReference type="OpenTargets" id="ENSG00000090889"/>
<dbReference type="PharmGKB" id="PA30105"/>
<dbReference type="VEuPathDB" id="HostDB:ENSG00000090889"/>
<dbReference type="eggNOG" id="KOG0244">
    <property type="taxonomic scope" value="Eukaryota"/>
</dbReference>
<dbReference type="GeneTree" id="ENSGT00940000158195"/>
<dbReference type="HOGENOM" id="CLU_001485_4_1_1"/>
<dbReference type="InParanoid" id="O95239"/>
<dbReference type="OMA" id="GDMGHTT"/>
<dbReference type="OrthoDB" id="3176171at2759"/>
<dbReference type="PAN-GO" id="O95239">
    <property type="GO annotations" value="4 GO annotations based on evolutionary models"/>
</dbReference>
<dbReference type="PhylomeDB" id="O95239"/>
<dbReference type="TreeFam" id="TF105224"/>
<dbReference type="PathwayCommons" id="O95239"/>
<dbReference type="Reactome" id="R-HSA-2132295">
    <property type="pathway name" value="MHC class II antigen presentation"/>
</dbReference>
<dbReference type="Reactome" id="R-HSA-437239">
    <property type="pathway name" value="Recycling pathway of L1"/>
</dbReference>
<dbReference type="Reactome" id="R-HSA-6811434">
    <property type="pathway name" value="COPI-dependent Golgi-to-ER retrograde traffic"/>
</dbReference>
<dbReference type="Reactome" id="R-HSA-983189">
    <property type="pathway name" value="Kinesins"/>
</dbReference>
<dbReference type="SignaLink" id="O95239"/>
<dbReference type="SIGNOR" id="O95239"/>
<dbReference type="BioGRID-ORCS" id="24137">
    <property type="hits" value="259 hits in 779 CRISPR screens"/>
</dbReference>
<dbReference type="ChiTaRS" id="KIF4A">
    <property type="organism name" value="human"/>
</dbReference>
<dbReference type="GeneWiki" id="KIF4A"/>
<dbReference type="GenomeRNAi" id="24137"/>
<dbReference type="Pharos" id="O95239">
    <property type="development level" value="Tbio"/>
</dbReference>
<dbReference type="PRO" id="PR:O95239"/>
<dbReference type="Proteomes" id="UP000005640">
    <property type="component" value="Chromosome X"/>
</dbReference>
<dbReference type="RNAct" id="O95239">
    <property type="molecule type" value="protein"/>
</dbReference>
<dbReference type="Bgee" id="ENSG00000090889">
    <property type="expression patterns" value="Expressed in oocyte and 124 other cell types or tissues"/>
</dbReference>
<dbReference type="GO" id="GO:1904115">
    <property type="term" value="C:axon cytoplasm"/>
    <property type="evidence" value="ECO:0007669"/>
    <property type="project" value="GOC"/>
</dbReference>
<dbReference type="GO" id="GO:0005694">
    <property type="term" value="C:chromosome"/>
    <property type="evidence" value="ECO:0007669"/>
    <property type="project" value="UniProtKB-SubCell"/>
</dbReference>
<dbReference type="GO" id="GO:0005737">
    <property type="term" value="C:cytoplasm"/>
    <property type="evidence" value="ECO:0000304"/>
    <property type="project" value="ProtInc"/>
</dbReference>
<dbReference type="GO" id="GO:0005829">
    <property type="term" value="C:cytosol"/>
    <property type="evidence" value="ECO:0000304"/>
    <property type="project" value="Reactome"/>
</dbReference>
<dbReference type="GO" id="GO:0016020">
    <property type="term" value="C:membrane"/>
    <property type="evidence" value="ECO:0007005"/>
    <property type="project" value="UniProtKB"/>
</dbReference>
<dbReference type="GO" id="GO:0005875">
    <property type="term" value="C:microtubule associated complex"/>
    <property type="evidence" value="ECO:0000318"/>
    <property type="project" value="GO_Central"/>
</dbReference>
<dbReference type="GO" id="GO:0030496">
    <property type="term" value="C:midbody"/>
    <property type="evidence" value="ECO:0000314"/>
    <property type="project" value="UniProtKB"/>
</dbReference>
<dbReference type="GO" id="GO:0016363">
    <property type="term" value="C:nuclear matrix"/>
    <property type="evidence" value="ECO:0007669"/>
    <property type="project" value="UniProtKB-SubCell"/>
</dbReference>
<dbReference type="GO" id="GO:0005876">
    <property type="term" value="C:spindle microtubule"/>
    <property type="evidence" value="ECO:0000304"/>
    <property type="project" value="ProtInc"/>
</dbReference>
<dbReference type="GO" id="GO:0005524">
    <property type="term" value="F:ATP binding"/>
    <property type="evidence" value="ECO:0007669"/>
    <property type="project" value="UniProtKB-KW"/>
</dbReference>
<dbReference type="GO" id="GO:0003677">
    <property type="term" value="F:DNA binding"/>
    <property type="evidence" value="ECO:0007669"/>
    <property type="project" value="UniProtKB-KW"/>
</dbReference>
<dbReference type="GO" id="GO:0051536">
    <property type="term" value="F:iron-sulfur cluster binding"/>
    <property type="evidence" value="ECO:0007669"/>
    <property type="project" value="UniProtKB-KW"/>
</dbReference>
<dbReference type="GO" id="GO:0046872">
    <property type="term" value="F:metal ion binding"/>
    <property type="evidence" value="ECO:0007669"/>
    <property type="project" value="UniProtKB-KW"/>
</dbReference>
<dbReference type="GO" id="GO:0008017">
    <property type="term" value="F:microtubule binding"/>
    <property type="evidence" value="ECO:0007669"/>
    <property type="project" value="InterPro"/>
</dbReference>
<dbReference type="GO" id="GO:0003777">
    <property type="term" value="F:microtubule motor activity"/>
    <property type="evidence" value="ECO:0000318"/>
    <property type="project" value="GO_Central"/>
</dbReference>
<dbReference type="GO" id="GO:0008089">
    <property type="term" value="P:anterograde axonal transport"/>
    <property type="evidence" value="ECO:0000304"/>
    <property type="project" value="ProtInc"/>
</dbReference>
<dbReference type="GO" id="GO:0000281">
    <property type="term" value="P:mitotic cytokinesis"/>
    <property type="evidence" value="ECO:0000315"/>
    <property type="project" value="UniProtKB"/>
</dbReference>
<dbReference type="GO" id="GO:0051256">
    <property type="term" value="P:mitotic spindle midzone assembly"/>
    <property type="evidence" value="ECO:0000315"/>
    <property type="project" value="UniProtKB"/>
</dbReference>
<dbReference type="GO" id="GO:0007052">
    <property type="term" value="P:mitotic spindle organization"/>
    <property type="evidence" value="ECO:0000318"/>
    <property type="project" value="GO_Central"/>
</dbReference>
<dbReference type="GO" id="GO:0006996">
    <property type="term" value="P:organelle organization"/>
    <property type="evidence" value="ECO:0000304"/>
    <property type="project" value="ProtInc"/>
</dbReference>
<dbReference type="GO" id="GO:0051231">
    <property type="term" value="P:spindle elongation"/>
    <property type="evidence" value="ECO:0000318"/>
    <property type="project" value="GO_Central"/>
</dbReference>
<dbReference type="CDD" id="cd01372">
    <property type="entry name" value="KISc_KIF4"/>
    <property type="match status" value="1"/>
</dbReference>
<dbReference type="FunFam" id="3.40.850.10:FF:000038">
    <property type="entry name" value="chromosome-associated kinesin KIF4A"/>
    <property type="match status" value="1"/>
</dbReference>
<dbReference type="Gene3D" id="3.40.850.10">
    <property type="entry name" value="Kinesin motor domain"/>
    <property type="match status" value="1"/>
</dbReference>
<dbReference type="InterPro" id="IPR027640">
    <property type="entry name" value="Kinesin-like_fam"/>
</dbReference>
<dbReference type="InterPro" id="IPR019821">
    <property type="entry name" value="Kinesin_motor_CS"/>
</dbReference>
<dbReference type="InterPro" id="IPR001752">
    <property type="entry name" value="Kinesin_motor_dom"/>
</dbReference>
<dbReference type="InterPro" id="IPR036961">
    <property type="entry name" value="Kinesin_motor_dom_sf"/>
</dbReference>
<dbReference type="InterPro" id="IPR027417">
    <property type="entry name" value="P-loop_NTPase"/>
</dbReference>
<dbReference type="PANTHER" id="PTHR47969">
    <property type="entry name" value="CHROMOSOME-ASSOCIATED KINESIN KIF4A-RELATED"/>
    <property type="match status" value="1"/>
</dbReference>
<dbReference type="PANTHER" id="PTHR47969:SF15">
    <property type="entry name" value="CHROMOSOME-ASSOCIATED KINESIN KIF4A-RELATED"/>
    <property type="match status" value="1"/>
</dbReference>
<dbReference type="Pfam" id="PF00225">
    <property type="entry name" value="Kinesin"/>
    <property type="match status" value="1"/>
</dbReference>
<dbReference type="PRINTS" id="PR00380">
    <property type="entry name" value="KINESINHEAVY"/>
</dbReference>
<dbReference type="SMART" id="SM00129">
    <property type="entry name" value="KISc"/>
    <property type="match status" value="1"/>
</dbReference>
<dbReference type="SUPFAM" id="SSF52540">
    <property type="entry name" value="P-loop containing nucleoside triphosphate hydrolases"/>
    <property type="match status" value="1"/>
</dbReference>
<dbReference type="PROSITE" id="PS00411">
    <property type="entry name" value="KINESIN_MOTOR_1"/>
    <property type="match status" value="1"/>
</dbReference>
<dbReference type="PROSITE" id="PS50067">
    <property type="entry name" value="KINESIN_MOTOR_2"/>
    <property type="match status" value="1"/>
</dbReference>
<accession>O95239</accession>
<accession>B2R7V5</accession>
<accession>D3DVU4</accession>
<accession>Q86TN3</accession>
<accession>Q86XX7</accession>
<accession>Q9NNY6</accession>
<accession>Q9NY24</accession>
<accession>Q9UMW3</accession>
<organism>
    <name type="scientific">Homo sapiens</name>
    <name type="common">Human</name>
    <dbReference type="NCBI Taxonomy" id="9606"/>
    <lineage>
        <taxon>Eukaryota</taxon>
        <taxon>Metazoa</taxon>
        <taxon>Chordata</taxon>
        <taxon>Craniata</taxon>
        <taxon>Vertebrata</taxon>
        <taxon>Euteleostomi</taxon>
        <taxon>Mammalia</taxon>
        <taxon>Eutheria</taxon>
        <taxon>Euarchontoglires</taxon>
        <taxon>Primates</taxon>
        <taxon>Haplorrhini</taxon>
        <taxon>Catarrhini</taxon>
        <taxon>Hominidae</taxon>
        <taxon>Homo</taxon>
    </lineage>
</organism>